<gene>
    <name evidence="3" type="primary">tazC</name>
    <name type="ORF">ATEG_03437</name>
</gene>
<name>TAZC_ASPTN</name>
<reference key="1">
    <citation type="submission" date="2005-09" db="EMBL/GenBank/DDBJ databases">
        <title>Annotation of the Aspergillus terreus NIH2624 genome.</title>
        <authorList>
            <person name="Birren B.W."/>
            <person name="Lander E.S."/>
            <person name="Galagan J.E."/>
            <person name="Nusbaum C."/>
            <person name="Devon K."/>
            <person name="Henn M."/>
            <person name="Ma L.-J."/>
            <person name="Jaffe D.B."/>
            <person name="Butler J."/>
            <person name="Alvarez P."/>
            <person name="Gnerre S."/>
            <person name="Grabherr M."/>
            <person name="Kleber M."/>
            <person name="Mauceli E.W."/>
            <person name="Brockman W."/>
            <person name="Rounsley S."/>
            <person name="Young S.K."/>
            <person name="LaButti K."/>
            <person name="Pushparaj V."/>
            <person name="DeCaprio D."/>
            <person name="Crawford M."/>
            <person name="Koehrsen M."/>
            <person name="Engels R."/>
            <person name="Montgomery P."/>
            <person name="Pearson M."/>
            <person name="Howarth C."/>
            <person name="Larson L."/>
            <person name="Luoma S."/>
            <person name="White J."/>
            <person name="Alvarado L."/>
            <person name="Kodira C.D."/>
            <person name="Zeng Q."/>
            <person name="Oleary S."/>
            <person name="Yandava C."/>
            <person name="Denning D.W."/>
            <person name="Nierman W.C."/>
            <person name="Milne T."/>
            <person name="Madden K."/>
        </authorList>
    </citation>
    <scope>NUCLEOTIDE SEQUENCE [LARGE SCALE GENOMIC DNA]</scope>
    <source>
        <strain>NIH 2624 / FGSC A1156</strain>
    </source>
</reference>
<reference key="2">
    <citation type="journal article" date="2022" name="Fungal Genet. Biol.">
        <title>Characterization of a silent azaphilone biosynthesis gene cluster in Aspergillus terreus NIH 2624.</title>
        <authorList>
            <person name="Sun W.W."/>
            <person name="Li C.Y."/>
            <person name="Chiang Y.M."/>
            <person name="Lin T.S."/>
            <person name="Warren S."/>
            <person name="Chang F.R."/>
            <person name="Wang C.C.C."/>
        </authorList>
    </citation>
    <scope>FUNCTION</scope>
    <scope>INDUCTION</scope>
    <scope>PATHWAY</scope>
</reference>
<accession>Q0CS97</accession>
<protein>
    <recommendedName>
        <fullName evidence="3">Probable esterase tazC</fullName>
        <ecNumber evidence="5">3.1.2.-</ecNumber>
    </recommendedName>
    <alternativeName>
        <fullName evidence="3">Azaphilone biosynthesis cluster protein C</fullName>
    </alternativeName>
</protein>
<dbReference type="EC" id="3.1.2.-" evidence="5"/>
<dbReference type="EMBL" id="CH476597">
    <property type="protein sequence ID" value="EAU36711.1"/>
    <property type="molecule type" value="Genomic_DNA"/>
</dbReference>
<dbReference type="RefSeq" id="XP_001212615.1">
    <property type="nucleotide sequence ID" value="XM_001212615.1"/>
</dbReference>
<dbReference type="SMR" id="Q0CS97"/>
<dbReference type="EnsemblFungi" id="EAU36711">
    <property type="protein sequence ID" value="EAU36711"/>
    <property type="gene ID" value="ATEG_03437"/>
</dbReference>
<dbReference type="GeneID" id="4318032"/>
<dbReference type="VEuPathDB" id="FungiDB:ATEG_03437"/>
<dbReference type="eggNOG" id="KOG2551">
    <property type="taxonomic scope" value="Eukaryota"/>
</dbReference>
<dbReference type="HOGENOM" id="CLU_051938_0_2_1"/>
<dbReference type="OMA" id="PRMLCLH"/>
<dbReference type="OrthoDB" id="414698at2759"/>
<dbReference type="Proteomes" id="UP000007963">
    <property type="component" value="Unassembled WGS sequence"/>
</dbReference>
<dbReference type="GO" id="GO:0005737">
    <property type="term" value="C:cytoplasm"/>
    <property type="evidence" value="ECO:0007669"/>
    <property type="project" value="TreeGrafter"/>
</dbReference>
<dbReference type="GO" id="GO:0005634">
    <property type="term" value="C:nucleus"/>
    <property type="evidence" value="ECO:0007669"/>
    <property type="project" value="TreeGrafter"/>
</dbReference>
<dbReference type="GO" id="GO:0016787">
    <property type="term" value="F:hydrolase activity"/>
    <property type="evidence" value="ECO:0007669"/>
    <property type="project" value="UniProtKB-KW"/>
</dbReference>
<dbReference type="GO" id="GO:0044550">
    <property type="term" value="P:secondary metabolite biosynthetic process"/>
    <property type="evidence" value="ECO:0007669"/>
    <property type="project" value="TreeGrafter"/>
</dbReference>
<dbReference type="Gene3D" id="3.40.50.1820">
    <property type="entry name" value="alpha/beta hydrolase"/>
    <property type="match status" value="1"/>
</dbReference>
<dbReference type="InterPro" id="IPR029058">
    <property type="entry name" value="AB_hydrolase_fold"/>
</dbReference>
<dbReference type="InterPro" id="IPR005645">
    <property type="entry name" value="FSH-like_dom"/>
</dbReference>
<dbReference type="InterPro" id="IPR050593">
    <property type="entry name" value="LovG"/>
</dbReference>
<dbReference type="PANTHER" id="PTHR48070:SF3">
    <property type="entry name" value="ESTERASE DBAE-RELATED"/>
    <property type="match status" value="1"/>
</dbReference>
<dbReference type="PANTHER" id="PTHR48070">
    <property type="entry name" value="ESTERASE OVCA2"/>
    <property type="match status" value="1"/>
</dbReference>
<dbReference type="Pfam" id="PF03959">
    <property type="entry name" value="FSH1"/>
    <property type="match status" value="1"/>
</dbReference>
<dbReference type="SUPFAM" id="SSF53474">
    <property type="entry name" value="alpha/beta-Hydrolases"/>
    <property type="match status" value="1"/>
</dbReference>
<proteinExistence type="evidence at transcript level"/>
<evidence type="ECO:0000250" key="1">
    <source>
        <dbReference type="UniProtKB" id="P38777"/>
    </source>
</evidence>
<evidence type="ECO:0000269" key="2">
    <source>
    </source>
</evidence>
<evidence type="ECO:0000303" key="3">
    <source>
    </source>
</evidence>
<evidence type="ECO:0000305" key="4"/>
<evidence type="ECO:0000305" key="5">
    <source>
    </source>
</evidence>
<comment type="function">
    <text evidence="2 5">Probable esterase; part of the gene cluster that mediates the biosynthesis of azaterrilone A and other azaphilones, a class of fungal metabolites characterized by a highly oxygenated pyrano-quinone bicyclic core and exhibiting a broad range of bioactivities (PubMed:35398258). The first step of the pathway begins with the non-reducing polyketide synthase tazA that assembles one acetyl-CoA starter unit, five malonyl-CoA units, and catalyzes a series of Claisen condensations, methylation, PT-mediated cyclization, and finally releases the first hexaketide precursor through the R-domain. The tazA product then undergoes reduction on its terminal ketone and the following pyran-ring formation by yet undetermined enzyme(s). Dehydration and enoyl reduction, possibly involving the trans-enoyl reductase tazE leads to the next intermediate. TazD is predicted as an acetyltransferase and might catalyze the acetylation steps leading to the synthesis of azaterrilone A. Azaterrilone A is not the final product of the taz pathway and both the highly reducing polyketide synthase tazB and the dual enzyme tazHJ catalyze late steps of the pathway, leading to the production of the 2 final stereoisomers that contain additional polyketide modification whose structures have still to be determined (Probable).</text>
</comment>
<comment type="pathway">
    <text evidence="5">Secondary metabolite biosynthesis.</text>
</comment>
<comment type="induction">
    <text evidence="2">Expression is positively regulated by the azaterrilone A cluster-specific transcription factor tazR.</text>
</comment>
<comment type="similarity">
    <text evidence="4">Belongs to the LovG family.</text>
</comment>
<feature type="chain" id="PRO_0000456069" description="Probable esterase tazC">
    <location>
        <begin position="1"/>
        <end position="265"/>
    </location>
</feature>
<feature type="active site" description="Charge relay system" evidence="1">
    <location>
        <position position="119"/>
    </location>
</feature>
<feature type="active site" description="Charge relay system" evidence="1">
    <location>
        <position position="209"/>
    </location>
</feature>
<feature type="active site" description="Charge relay system" evidence="1">
    <location>
        <position position="236"/>
    </location>
</feature>
<organism>
    <name type="scientific">Aspergillus terreus (strain NIH 2624 / FGSC A1156)</name>
    <dbReference type="NCBI Taxonomy" id="341663"/>
    <lineage>
        <taxon>Eukaryota</taxon>
        <taxon>Fungi</taxon>
        <taxon>Dikarya</taxon>
        <taxon>Ascomycota</taxon>
        <taxon>Pezizomycotina</taxon>
        <taxon>Eurotiomycetes</taxon>
        <taxon>Eurotiomycetidae</taxon>
        <taxon>Eurotiales</taxon>
        <taxon>Aspergillaceae</taxon>
        <taxon>Aspergillus</taxon>
        <taxon>Aspergillus subgen. Circumdati</taxon>
    </lineage>
</organism>
<sequence>MRATIDDPQAALPRILCLHGGGSNSRIFKAQTRALRYELSNYFRFVFVEGPFDSEPGPDVTSAYEKFGPFRRWFRSGPQHPPIDSHTAVACIEESIYAAMERDDLQGGTGDYVAVMGFSQGAKLAASLLFRQQIRAEKLGQAMSGTNFRFAILLNGRGPLVSMDPELVMNTALMDASQIALDRPVTLEDLCRKEHVLRLPTIHVHGLQDPGLMLHRVLLREYCSKNARLVEWDGAHRVPIKTKDVLPLVHEILQLAKQTGVVFAA</sequence>
<keyword id="KW-0378">Hydrolase</keyword>
<keyword id="KW-1185">Reference proteome</keyword>